<name>SRDH_NEUCR</name>
<dbReference type="EC" id="1.-.-.-" evidence="9"/>
<dbReference type="EMBL" id="CM002236">
    <property type="protein sequence ID" value="EAA36371.1"/>
    <property type="molecule type" value="Genomic_DNA"/>
</dbReference>
<dbReference type="RefSeq" id="XP_965607.1">
    <property type="nucleotide sequence ID" value="XM_960514.1"/>
</dbReference>
<dbReference type="SMR" id="Q7SHH9"/>
<dbReference type="STRING" id="367110.Q7SHH9"/>
<dbReference type="PaxDb" id="5141-EFNCRP00000002423"/>
<dbReference type="EnsemblFungi" id="EAA36371">
    <property type="protein sequence ID" value="EAA36371"/>
    <property type="gene ID" value="NCU02925"/>
</dbReference>
<dbReference type="GeneID" id="3881732"/>
<dbReference type="KEGG" id="ncr:NCU02925"/>
<dbReference type="VEuPathDB" id="FungiDB:NCU02925"/>
<dbReference type="HOGENOM" id="CLU_009665_12_2_1"/>
<dbReference type="InParanoid" id="Q7SHH9"/>
<dbReference type="OMA" id="KMNPIRG"/>
<dbReference type="OrthoDB" id="2431938at2759"/>
<dbReference type="Proteomes" id="UP000001805">
    <property type="component" value="Chromosome 1, Linkage Group I"/>
</dbReference>
<dbReference type="GO" id="GO:0071949">
    <property type="term" value="F:FAD binding"/>
    <property type="evidence" value="ECO:0007669"/>
    <property type="project" value="InterPro"/>
</dbReference>
<dbReference type="GO" id="GO:0004497">
    <property type="term" value="F:monooxygenase activity"/>
    <property type="evidence" value="ECO:0007669"/>
    <property type="project" value="UniProtKB-KW"/>
</dbReference>
<dbReference type="GO" id="GO:0044550">
    <property type="term" value="P:secondary metabolite biosynthetic process"/>
    <property type="evidence" value="ECO:0000318"/>
    <property type="project" value="GO_Central"/>
</dbReference>
<dbReference type="Gene3D" id="3.50.50.60">
    <property type="entry name" value="FAD/NAD(P)-binding domain"/>
    <property type="match status" value="1"/>
</dbReference>
<dbReference type="InterPro" id="IPR002938">
    <property type="entry name" value="FAD-bd"/>
</dbReference>
<dbReference type="InterPro" id="IPR036188">
    <property type="entry name" value="FAD/NAD-bd_sf"/>
</dbReference>
<dbReference type="InterPro" id="IPR050562">
    <property type="entry name" value="FAD_mOase_fung"/>
</dbReference>
<dbReference type="PANTHER" id="PTHR47356:SF2">
    <property type="entry name" value="FAD-BINDING DOMAIN-CONTAINING PROTEIN-RELATED"/>
    <property type="match status" value="1"/>
</dbReference>
<dbReference type="PANTHER" id="PTHR47356">
    <property type="entry name" value="FAD-DEPENDENT MONOOXYGENASE ASQG-RELATED"/>
    <property type="match status" value="1"/>
</dbReference>
<dbReference type="Pfam" id="PF01494">
    <property type="entry name" value="FAD_binding_3"/>
    <property type="match status" value="2"/>
</dbReference>
<dbReference type="PRINTS" id="PR00420">
    <property type="entry name" value="RNGMNOXGNASE"/>
</dbReference>
<dbReference type="SUPFAM" id="SSF51905">
    <property type="entry name" value="FAD/NAD(P)-binding domain"/>
    <property type="match status" value="1"/>
</dbReference>
<gene>
    <name evidence="7" type="primary">srdH</name>
    <name evidence="6" type="synonym">fbm-1</name>
    <name type="ORF">NCU02925</name>
</gene>
<proteinExistence type="evidence at transcript level"/>
<comment type="function">
    <text evidence="3 4 5">Highly reducing polyketide synthase; part of the gene cluster that mediates the biosynthesis of sordarial, a salicylic aldehyde structurally related to the phytotoxin pyriculol (PubMed:19277664, PubMed:28485098, PubMed:30908040). The most interesting aspect of this pathway is formation of an aromatic product from the highly reducing polyketide synthase srdA (PubMed:30908040). SrdA synthesizes a reduced polyketide chain from one molecule of acetyl-CoA and five molecules of malonyl-CoA (PubMed:30908040). The polyketide chain is then reductively released as an aldehyde (PubMed:30908040). The oxidoreductases srdC, srdD and srdE then oxidize one of the hydroxy groups to facilitate the intramolecular aldol condensation, followed by dehydration to yield a salicylic aldehyde (PubMed:30908040). This aldehyde can undergo facile reduction by endogenous reductases to yield the alcohol 1-hydroxy-2-hydroxymethyl-3-pent-1,3-dienylbenzene (PubMed:30908040). The flavin-dependent srdI counteract against the propensity of the aldehydes to be reduced under physiological conditions and is responsible for reoxidizing 1-hydroxy-2-hydroxymethyl-3-pent-1,3-dienylbenzene back to the salicylic aldehyde (PubMed:30908040). This salicylic aldehyde is then selectively epoxidized by the cupin-domain-containing oxidoreductase srdB to yield the epoxide, which can be hydrolyzed stereoselectively by the hydrolase srdG to give the final product sordarial (PubMed:30908040).</text>
</comment>
<comment type="cofactor">
    <cofactor evidence="8">
        <name>FAD</name>
        <dbReference type="ChEBI" id="CHEBI:57692"/>
    </cofactor>
</comment>
<comment type="induction">
    <text evidence="3 4">Expression is up-regulated during sexual development (PubMed:19277664). Expression is also up-regulated during confrontation with the arthropod fungivore Drosophila melanogaster (PubMed:28485098).</text>
</comment>
<comment type="disruption phenotype">
    <text evidence="3">Leads to a delay in fruiting body maturation.</text>
</comment>
<comment type="similarity">
    <text evidence="8">Belongs to the paxM FAD-dependent monooxygenase family.</text>
</comment>
<comment type="caution">
    <text evidence="4 5">A recent genetics report associated srdA and its cluster with the biosynthesis of furanocoumarin neurosporin A, a metabolite produced by N.crassa for chemoresistance against predation by arthropod fungivores (PubMed:28485098). However, based on the gene cluster organization and predicted gene functions, this cluster is unlikely to be involved in neurosporin A biosynthesis, but instead produces compounds similar to pyriculol (PubMed:30908040).</text>
</comment>
<sequence length="448" mass="49790">MTFKVIIVGGGPVGLYMAHAFERANIDYVILEQQDTVLNISGQLLFTWPQTVRLFDQIGLLADLENVALGIHHKKRLFGDNGQVTTTSNFWDAMQDNHGYPFLPLLRSELVKILYNHLKGRESNIRVNSRVTDIRPHATGVHVHLADGSLIQGSIVVGADGVHSRTRQIMDSLVAQHALNPARLANKPMVSTFYGIFGRASNVDLGIEPEVFFESRGGGGEGGAVVQCLATKDIVQFVTLKPLPGGPTSERSPRYSDEEMDAYAASLADVAVCPGVKFGDVWAKVQRKSTRMLNQEEGFLDNWFFDRIVLVGDAVHKSTSVNGLGMTCGLHSGAVLANELHSLLSRQREKEEEPSTEELEGAFGRYQEDRKTEVKPIWNGGHAMIREVVKKGWVSWFWDRFVLPWCDMETFAKGLLVSVLLIRQGQILRFVPFEGRGGRVPWARKVVV</sequence>
<evidence type="ECO:0000250" key="1">
    <source>
        <dbReference type="UniProtKB" id="B8M9J8"/>
    </source>
</evidence>
<evidence type="ECO:0000250" key="2">
    <source>
        <dbReference type="UniProtKB" id="L0E4H0"/>
    </source>
</evidence>
<evidence type="ECO:0000269" key="3">
    <source>
    </source>
</evidence>
<evidence type="ECO:0000269" key="4">
    <source>
    </source>
</evidence>
<evidence type="ECO:0000269" key="5">
    <source>
    </source>
</evidence>
<evidence type="ECO:0000303" key="6">
    <source>
    </source>
</evidence>
<evidence type="ECO:0000303" key="7">
    <source>
    </source>
</evidence>
<evidence type="ECO:0000305" key="8"/>
<evidence type="ECO:0000305" key="9">
    <source>
    </source>
</evidence>
<feature type="chain" id="PRO_0000449336" description="FAD-dependent monooxygenase srdH">
    <location>
        <begin position="1"/>
        <end position="448"/>
    </location>
</feature>
<feature type="active site" evidence="2">
    <location>
        <position position="227"/>
    </location>
</feature>
<feature type="binding site" evidence="1">
    <location>
        <position position="32"/>
    </location>
    <ligand>
        <name>FAD</name>
        <dbReference type="ChEBI" id="CHEBI:57692"/>
    </ligand>
</feature>
<feature type="binding site" evidence="1">
    <location>
        <position position="107"/>
    </location>
    <ligand>
        <name>FAD</name>
        <dbReference type="ChEBI" id="CHEBI:57692"/>
    </ligand>
</feature>
<feature type="binding site" evidence="1">
    <location>
        <position position="313"/>
    </location>
    <ligand>
        <name>FAD</name>
        <dbReference type="ChEBI" id="CHEBI:57692"/>
    </ligand>
</feature>
<protein>
    <recommendedName>
        <fullName evidence="7">FAD-dependent monooxygenase srdH</fullName>
        <ecNumber evidence="9">1.-.-.-</ecNumber>
    </recommendedName>
    <alternativeName>
        <fullName evidence="6">Fruiting body maturation protein 1</fullName>
    </alternativeName>
    <alternativeName>
        <fullName evidence="7">Sordarial biosynthesis cluster protein srdH</fullName>
    </alternativeName>
</protein>
<keyword id="KW-0274">FAD</keyword>
<keyword id="KW-0285">Flavoprotein</keyword>
<keyword id="KW-0503">Monooxygenase</keyword>
<keyword id="KW-0560">Oxidoreductase</keyword>
<keyword id="KW-1185">Reference proteome</keyword>
<reference key="1">
    <citation type="journal article" date="2003" name="Nature">
        <title>The genome sequence of the filamentous fungus Neurospora crassa.</title>
        <authorList>
            <person name="Galagan J.E."/>
            <person name="Calvo S.E."/>
            <person name="Borkovich K.A."/>
            <person name="Selker E.U."/>
            <person name="Read N.D."/>
            <person name="Jaffe D.B."/>
            <person name="FitzHugh W."/>
            <person name="Ma L.-J."/>
            <person name="Smirnov S."/>
            <person name="Purcell S."/>
            <person name="Rehman B."/>
            <person name="Elkins T."/>
            <person name="Engels R."/>
            <person name="Wang S."/>
            <person name="Nielsen C.B."/>
            <person name="Butler J."/>
            <person name="Endrizzi M."/>
            <person name="Qui D."/>
            <person name="Ianakiev P."/>
            <person name="Bell-Pedersen D."/>
            <person name="Nelson M.A."/>
            <person name="Werner-Washburne M."/>
            <person name="Selitrennikoff C.P."/>
            <person name="Kinsey J.A."/>
            <person name="Braun E.L."/>
            <person name="Zelter A."/>
            <person name="Schulte U."/>
            <person name="Kothe G.O."/>
            <person name="Jedd G."/>
            <person name="Mewes H.-W."/>
            <person name="Staben C."/>
            <person name="Marcotte E."/>
            <person name="Greenberg D."/>
            <person name="Roy A."/>
            <person name="Foley K."/>
            <person name="Naylor J."/>
            <person name="Stange-Thomann N."/>
            <person name="Barrett R."/>
            <person name="Gnerre S."/>
            <person name="Kamal M."/>
            <person name="Kamvysselis M."/>
            <person name="Mauceli E.W."/>
            <person name="Bielke C."/>
            <person name="Rudd S."/>
            <person name="Frishman D."/>
            <person name="Krystofova S."/>
            <person name="Rasmussen C."/>
            <person name="Metzenberg R.L."/>
            <person name="Perkins D.D."/>
            <person name="Kroken S."/>
            <person name="Cogoni C."/>
            <person name="Macino G."/>
            <person name="Catcheside D.E.A."/>
            <person name="Li W."/>
            <person name="Pratt R.J."/>
            <person name="Osmani S.A."/>
            <person name="DeSouza C.P.C."/>
            <person name="Glass N.L."/>
            <person name="Orbach M.J."/>
            <person name="Berglund J.A."/>
            <person name="Voelker R."/>
            <person name="Yarden O."/>
            <person name="Plamann M."/>
            <person name="Seiler S."/>
            <person name="Dunlap J.C."/>
            <person name="Radford A."/>
            <person name="Aramayo R."/>
            <person name="Natvig D.O."/>
            <person name="Alex L.A."/>
            <person name="Mannhaupt G."/>
            <person name="Ebbole D.J."/>
            <person name="Freitag M."/>
            <person name="Paulsen I."/>
            <person name="Sachs M.S."/>
            <person name="Lander E.S."/>
            <person name="Nusbaum C."/>
            <person name="Birren B.W."/>
        </authorList>
    </citation>
    <scope>NUCLEOTIDE SEQUENCE [LARGE SCALE GENOMIC DNA]</scope>
    <source>
        <strain>ATCC 24698 / 74-OR23-1A / CBS 708.71 / DSM 1257 / FGSC 987</strain>
    </source>
</reference>
<reference key="2">
    <citation type="journal article" date="2009" name="Curr. Genet.">
        <title>A novel polyketide biosynthesis gene cluster is involved in fruiting body morphogenesis in the filamentous fungi Sordaria macrospora and Neurospora crassa.</title>
        <authorList>
            <person name="Nowrousian M."/>
        </authorList>
    </citation>
    <scope>FUNCTION</scope>
    <scope>DISRUPTION PHENOTYPE</scope>
    <scope>INDUCTION</scope>
</reference>
<reference key="3">
    <citation type="journal article" date="2017" name="Environ. Microbiol.">
        <title>Production of a fungal furocoumarin by a polyketide synthase gene cluster confers the chemo-resistance of Neurospora crassa to the predation by fungivorous arthropods.</title>
        <authorList>
            <person name="Zhao Y."/>
            <person name="Ding J."/>
            <person name="Yuan W."/>
            <person name="Huang J."/>
            <person name="Huang W."/>
            <person name="Wang Y."/>
            <person name="Zheng W."/>
        </authorList>
    </citation>
    <scope>FUNCTION</scope>
    <scope>INDUCTION</scope>
</reference>
<reference key="4">
    <citation type="journal article" date="2019" name="J. Nat. Prod.">
        <title>Genome mining reveals Neurospora crassa can produce the salicylaldehyde sordarial.</title>
        <authorList>
            <person name="Zhao Z."/>
            <person name="Ying Y."/>
            <person name="Hung Y.S."/>
            <person name="Tang Y."/>
        </authorList>
    </citation>
    <scope>FUNCTION</scope>
    <scope>PATHWAY</scope>
</reference>
<accession>Q7SHH9</accession>
<organism>
    <name type="scientific">Neurospora crassa (strain ATCC 24698 / 74-OR23-1A / CBS 708.71 / DSM 1257 / FGSC 987)</name>
    <dbReference type="NCBI Taxonomy" id="367110"/>
    <lineage>
        <taxon>Eukaryota</taxon>
        <taxon>Fungi</taxon>
        <taxon>Dikarya</taxon>
        <taxon>Ascomycota</taxon>
        <taxon>Pezizomycotina</taxon>
        <taxon>Sordariomycetes</taxon>
        <taxon>Sordariomycetidae</taxon>
        <taxon>Sordariales</taxon>
        <taxon>Sordariaceae</taxon>
        <taxon>Neurospora</taxon>
    </lineage>
</organism>